<keyword id="KW-0025">Alternative splicing</keyword>
<keyword id="KW-0378">Hydrolase</keyword>
<keyword id="KW-0479">Metal-binding</keyword>
<keyword id="KW-1185">Reference proteome</keyword>
<keyword id="KW-0862">Zinc</keyword>
<reference key="1">
    <citation type="journal article" date="1999" name="Nature">
        <title>Sequence and analysis of chromosome 4 of the plant Arabidopsis thaliana.</title>
        <authorList>
            <person name="Mayer K.F.X."/>
            <person name="Schueller C."/>
            <person name="Wambutt R."/>
            <person name="Murphy G."/>
            <person name="Volckaert G."/>
            <person name="Pohl T."/>
            <person name="Duesterhoeft A."/>
            <person name="Stiekema W."/>
            <person name="Entian K.-D."/>
            <person name="Terryn N."/>
            <person name="Harris B."/>
            <person name="Ansorge W."/>
            <person name="Brandt P."/>
            <person name="Grivell L.A."/>
            <person name="Rieger M."/>
            <person name="Weichselgartner M."/>
            <person name="de Simone V."/>
            <person name="Obermaier B."/>
            <person name="Mache R."/>
            <person name="Mueller M."/>
            <person name="Kreis M."/>
            <person name="Delseny M."/>
            <person name="Puigdomenech P."/>
            <person name="Watson M."/>
            <person name="Schmidtheini T."/>
            <person name="Reichert B."/>
            <person name="Portetelle D."/>
            <person name="Perez-Alonso M."/>
            <person name="Boutry M."/>
            <person name="Bancroft I."/>
            <person name="Vos P."/>
            <person name="Hoheisel J."/>
            <person name="Zimmermann W."/>
            <person name="Wedler H."/>
            <person name="Ridley P."/>
            <person name="Langham S.-A."/>
            <person name="McCullagh B."/>
            <person name="Bilham L."/>
            <person name="Robben J."/>
            <person name="van der Schueren J."/>
            <person name="Grymonprez B."/>
            <person name="Chuang Y.-J."/>
            <person name="Vandenbussche F."/>
            <person name="Braeken M."/>
            <person name="Weltjens I."/>
            <person name="Voet M."/>
            <person name="Bastiaens I."/>
            <person name="Aert R."/>
            <person name="Defoor E."/>
            <person name="Weitzenegger T."/>
            <person name="Bothe G."/>
            <person name="Ramsperger U."/>
            <person name="Hilbert H."/>
            <person name="Braun M."/>
            <person name="Holzer E."/>
            <person name="Brandt A."/>
            <person name="Peters S."/>
            <person name="van Staveren M."/>
            <person name="Dirkse W."/>
            <person name="Mooijman P."/>
            <person name="Klein Lankhorst R."/>
            <person name="Rose M."/>
            <person name="Hauf J."/>
            <person name="Koetter P."/>
            <person name="Berneiser S."/>
            <person name="Hempel S."/>
            <person name="Feldpausch M."/>
            <person name="Lamberth S."/>
            <person name="Van den Daele H."/>
            <person name="De Keyser A."/>
            <person name="Buysshaert C."/>
            <person name="Gielen J."/>
            <person name="Villarroel R."/>
            <person name="De Clercq R."/>
            <person name="van Montagu M."/>
            <person name="Rogers J."/>
            <person name="Cronin A."/>
            <person name="Quail M.A."/>
            <person name="Bray-Allen S."/>
            <person name="Clark L."/>
            <person name="Doggett J."/>
            <person name="Hall S."/>
            <person name="Kay M."/>
            <person name="Lennard N."/>
            <person name="McLay K."/>
            <person name="Mayes R."/>
            <person name="Pettett A."/>
            <person name="Rajandream M.A."/>
            <person name="Lyne M."/>
            <person name="Benes V."/>
            <person name="Rechmann S."/>
            <person name="Borkova D."/>
            <person name="Bloecker H."/>
            <person name="Scharfe M."/>
            <person name="Grimm M."/>
            <person name="Loehnert T.-H."/>
            <person name="Dose S."/>
            <person name="de Haan M."/>
            <person name="Maarse A.C."/>
            <person name="Schaefer M."/>
            <person name="Mueller-Auer S."/>
            <person name="Gabel C."/>
            <person name="Fuchs M."/>
            <person name="Fartmann B."/>
            <person name="Granderath K."/>
            <person name="Dauner D."/>
            <person name="Herzl A."/>
            <person name="Neumann S."/>
            <person name="Argiriou A."/>
            <person name="Vitale D."/>
            <person name="Liguori R."/>
            <person name="Piravandi E."/>
            <person name="Massenet O."/>
            <person name="Quigley F."/>
            <person name="Clabauld G."/>
            <person name="Muendlein A."/>
            <person name="Felber R."/>
            <person name="Schnabl S."/>
            <person name="Hiller R."/>
            <person name="Schmidt W."/>
            <person name="Lecharny A."/>
            <person name="Aubourg S."/>
            <person name="Chefdor F."/>
            <person name="Cooke R."/>
            <person name="Berger C."/>
            <person name="Monfort A."/>
            <person name="Casacuberta E."/>
            <person name="Gibbons T."/>
            <person name="Weber N."/>
            <person name="Vandenbol M."/>
            <person name="Bargues M."/>
            <person name="Terol J."/>
            <person name="Torres A."/>
            <person name="Perez-Perez A."/>
            <person name="Purnelle B."/>
            <person name="Bent E."/>
            <person name="Johnson S."/>
            <person name="Tacon D."/>
            <person name="Jesse T."/>
            <person name="Heijnen L."/>
            <person name="Schwarz S."/>
            <person name="Scholler P."/>
            <person name="Heber S."/>
            <person name="Francs P."/>
            <person name="Bielke C."/>
            <person name="Frishman D."/>
            <person name="Haase D."/>
            <person name="Lemcke K."/>
            <person name="Mewes H.-W."/>
            <person name="Stocker S."/>
            <person name="Zaccaria P."/>
            <person name="Bevan M."/>
            <person name="Wilson R.K."/>
            <person name="de la Bastide M."/>
            <person name="Habermann K."/>
            <person name="Parnell L."/>
            <person name="Dedhia N."/>
            <person name="Gnoj L."/>
            <person name="Schutz K."/>
            <person name="Huang E."/>
            <person name="Spiegel L."/>
            <person name="Sekhon M."/>
            <person name="Murray J."/>
            <person name="Sheet P."/>
            <person name="Cordes M."/>
            <person name="Abu-Threideh J."/>
            <person name="Stoneking T."/>
            <person name="Kalicki J."/>
            <person name="Graves T."/>
            <person name="Harmon G."/>
            <person name="Edwards J."/>
            <person name="Latreille P."/>
            <person name="Courtney L."/>
            <person name="Cloud J."/>
            <person name="Abbott A."/>
            <person name="Scott K."/>
            <person name="Johnson D."/>
            <person name="Minx P."/>
            <person name="Bentley D."/>
            <person name="Fulton B."/>
            <person name="Miller N."/>
            <person name="Greco T."/>
            <person name="Kemp K."/>
            <person name="Kramer J."/>
            <person name="Fulton L."/>
            <person name="Mardis E."/>
            <person name="Dante M."/>
            <person name="Pepin K."/>
            <person name="Hillier L.W."/>
            <person name="Nelson J."/>
            <person name="Spieth J."/>
            <person name="Ryan E."/>
            <person name="Andrews S."/>
            <person name="Geisel C."/>
            <person name="Layman D."/>
            <person name="Du H."/>
            <person name="Ali J."/>
            <person name="Berghoff A."/>
            <person name="Jones K."/>
            <person name="Drone K."/>
            <person name="Cotton M."/>
            <person name="Joshu C."/>
            <person name="Antonoiu B."/>
            <person name="Zidanic M."/>
            <person name="Strong C."/>
            <person name="Sun H."/>
            <person name="Lamar B."/>
            <person name="Yordan C."/>
            <person name="Ma P."/>
            <person name="Zhong J."/>
            <person name="Preston R."/>
            <person name="Vil D."/>
            <person name="Shekher M."/>
            <person name="Matero A."/>
            <person name="Shah R."/>
            <person name="Swaby I.K."/>
            <person name="O'Shaughnessy A."/>
            <person name="Rodriguez M."/>
            <person name="Hoffman J."/>
            <person name="Till S."/>
            <person name="Granat S."/>
            <person name="Shohdy N."/>
            <person name="Hasegawa A."/>
            <person name="Hameed A."/>
            <person name="Lodhi M."/>
            <person name="Johnson A."/>
            <person name="Chen E."/>
            <person name="Marra M.A."/>
            <person name="Martienssen R."/>
            <person name="McCombie W.R."/>
        </authorList>
    </citation>
    <scope>NUCLEOTIDE SEQUENCE [LARGE SCALE GENOMIC DNA]</scope>
    <source>
        <strain>cv. Columbia</strain>
    </source>
</reference>
<reference key="2">
    <citation type="journal article" date="2017" name="Plant J.">
        <title>Araport11: a complete reannotation of the Arabidopsis thaliana reference genome.</title>
        <authorList>
            <person name="Cheng C.Y."/>
            <person name="Krishnakumar V."/>
            <person name="Chan A.P."/>
            <person name="Thibaud-Nissen F."/>
            <person name="Schobel S."/>
            <person name="Town C.D."/>
        </authorList>
    </citation>
    <scope>GENOME REANNOTATION</scope>
    <source>
        <strain>cv. Columbia</strain>
    </source>
</reference>
<reference key="3">
    <citation type="journal article" date="2002" name="Science">
        <title>Functional annotation of a full-length Arabidopsis cDNA collection.</title>
        <authorList>
            <person name="Seki M."/>
            <person name="Narusaka M."/>
            <person name="Kamiya A."/>
            <person name="Ishida J."/>
            <person name="Satou M."/>
            <person name="Sakurai T."/>
            <person name="Nakajima M."/>
            <person name="Enju A."/>
            <person name="Akiyama K."/>
            <person name="Oono Y."/>
            <person name="Muramatsu M."/>
            <person name="Hayashizaki Y."/>
            <person name="Kawai J."/>
            <person name="Carninci P."/>
            <person name="Itoh M."/>
            <person name="Ishii Y."/>
            <person name="Arakawa T."/>
            <person name="Shibata K."/>
            <person name="Shinagawa A."/>
            <person name="Shinozaki K."/>
        </authorList>
    </citation>
    <scope>NUCLEOTIDE SEQUENCE [LARGE SCALE MRNA]</scope>
    <source>
        <strain>cv. Columbia</strain>
    </source>
</reference>
<reference key="4">
    <citation type="journal article" date="2003" name="Science">
        <title>Empirical analysis of transcriptional activity in the Arabidopsis genome.</title>
        <authorList>
            <person name="Yamada K."/>
            <person name="Lim J."/>
            <person name="Dale J.M."/>
            <person name="Chen H."/>
            <person name="Shinn P."/>
            <person name="Palm C.J."/>
            <person name="Southwick A.M."/>
            <person name="Wu H.C."/>
            <person name="Kim C.J."/>
            <person name="Nguyen M."/>
            <person name="Pham P.K."/>
            <person name="Cheuk R.F."/>
            <person name="Karlin-Newmann G."/>
            <person name="Liu S.X."/>
            <person name="Lam B."/>
            <person name="Sakano H."/>
            <person name="Wu T."/>
            <person name="Yu G."/>
            <person name="Miranda M."/>
            <person name="Quach H.L."/>
            <person name="Tripp M."/>
            <person name="Chang C.H."/>
            <person name="Lee J.M."/>
            <person name="Toriumi M.J."/>
            <person name="Chan M.M."/>
            <person name="Tang C.C."/>
            <person name="Onodera C.S."/>
            <person name="Deng J.M."/>
            <person name="Akiyama K."/>
            <person name="Ansari Y."/>
            <person name="Arakawa T."/>
            <person name="Banh J."/>
            <person name="Banno F."/>
            <person name="Bowser L."/>
            <person name="Brooks S.Y."/>
            <person name="Carninci P."/>
            <person name="Chao Q."/>
            <person name="Choy N."/>
            <person name="Enju A."/>
            <person name="Goldsmith A.D."/>
            <person name="Gurjal M."/>
            <person name="Hansen N.F."/>
            <person name="Hayashizaki Y."/>
            <person name="Johnson-Hopson C."/>
            <person name="Hsuan V.W."/>
            <person name="Iida K."/>
            <person name="Karnes M."/>
            <person name="Khan S."/>
            <person name="Koesema E."/>
            <person name="Ishida J."/>
            <person name="Jiang P.X."/>
            <person name="Jones T."/>
            <person name="Kawai J."/>
            <person name="Kamiya A."/>
            <person name="Meyers C."/>
            <person name="Nakajima M."/>
            <person name="Narusaka M."/>
            <person name="Seki M."/>
            <person name="Sakurai T."/>
            <person name="Satou M."/>
            <person name="Tamse R."/>
            <person name="Vaysberg M."/>
            <person name="Wallender E.K."/>
            <person name="Wong C."/>
            <person name="Yamamura Y."/>
            <person name="Yuan S."/>
            <person name="Shinozaki K."/>
            <person name="Davis R.W."/>
            <person name="Theologis A."/>
            <person name="Ecker J.R."/>
        </authorList>
    </citation>
    <scope>NUCLEOTIDE SEQUENCE [LARGE SCALE MRNA]</scope>
    <source>
        <strain>cv. Columbia</strain>
    </source>
</reference>
<proteinExistence type="evidence at transcript level"/>
<comment type="function">
    <text evidence="1">Hydrolyzes ADP-ribose, IDP-ribose, CDP-glycerol, CDP-choline and CDP-ethanolamine, but not other non-reducing ADP-sugars or CDP-glucose.</text>
</comment>
<comment type="catalytic activity">
    <reaction>
        <text>CDP-choline + H2O = phosphocholine + CMP + 2 H(+)</text>
        <dbReference type="Rhea" id="RHEA:32487"/>
        <dbReference type="ChEBI" id="CHEBI:15377"/>
        <dbReference type="ChEBI" id="CHEBI:15378"/>
        <dbReference type="ChEBI" id="CHEBI:58779"/>
        <dbReference type="ChEBI" id="CHEBI:60377"/>
        <dbReference type="ChEBI" id="CHEBI:295975"/>
        <dbReference type="EC" id="3.6.1.53"/>
    </reaction>
</comment>
<comment type="catalytic activity">
    <reaction>
        <text>ADP-D-ribose + H2O = D-ribose 5-phosphate + AMP + 2 H(+)</text>
        <dbReference type="Rhea" id="RHEA:10412"/>
        <dbReference type="ChEBI" id="CHEBI:15377"/>
        <dbReference type="ChEBI" id="CHEBI:15378"/>
        <dbReference type="ChEBI" id="CHEBI:57967"/>
        <dbReference type="ChEBI" id="CHEBI:78346"/>
        <dbReference type="ChEBI" id="CHEBI:456215"/>
        <dbReference type="EC" id="3.6.1.13"/>
    </reaction>
</comment>
<comment type="catalytic activity">
    <reaction>
        <text>ADP-D-ribose + H2O = D-ribose 5-phosphate + AMP + 2 H(+)</text>
        <dbReference type="Rhea" id="RHEA:10412"/>
        <dbReference type="ChEBI" id="CHEBI:15377"/>
        <dbReference type="ChEBI" id="CHEBI:15378"/>
        <dbReference type="ChEBI" id="CHEBI:57967"/>
        <dbReference type="ChEBI" id="CHEBI:78346"/>
        <dbReference type="ChEBI" id="CHEBI:456215"/>
        <dbReference type="EC" id="3.6.1.53"/>
    </reaction>
</comment>
<comment type="catalytic activity">
    <reaction>
        <text>CDP-glycerol + H2O = sn-glycerol 3-phosphate + CMP + 2 H(+)</text>
        <dbReference type="Rhea" id="RHEA:21692"/>
        <dbReference type="ChEBI" id="CHEBI:15377"/>
        <dbReference type="ChEBI" id="CHEBI:15378"/>
        <dbReference type="ChEBI" id="CHEBI:57597"/>
        <dbReference type="ChEBI" id="CHEBI:58311"/>
        <dbReference type="ChEBI" id="CHEBI:60377"/>
        <dbReference type="EC" id="3.6.1.16"/>
    </reaction>
</comment>
<comment type="cofactor">
    <cofactor evidence="1">
        <name>Mg(2+)</name>
        <dbReference type="ChEBI" id="CHEBI:18420"/>
    </cofactor>
</comment>
<comment type="subunit">
    <text evidence="1">Monomer.</text>
</comment>
<comment type="alternative products">
    <event type="alternative splicing"/>
    <isoform>
        <id>Q9SB68-1</id>
        <name>1</name>
        <sequence type="displayed"/>
    </isoform>
    <text>A number of isoforms are produced. According to EST sequences.</text>
</comment>
<comment type="similarity">
    <text evidence="2">Belongs to the ADPRibase-Mn family.</text>
</comment>
<name>ADPRM_ARATH</name>
<feature type="chain" id="PRO_0000417565" description="Manganese-dependent ADP-ribose/CDP-alcohol diphosphatase">
    <location>
        <begin position="1"/>
        <end position="311"/>
    </location>
</feature>
<feature type="binding site" evidence="1">
    <location>
        <position position="17"/>
    </location>
    <ligand>
        <name>Zn(2+)</name>
        <dbReference type="ChEBI" id="CHEBI:29105"/>
        <label>1</label>
    </ligand>
</feature>
<feature type="binding site" evidence="1">
    <location>
        <position position="19"/>
    </location>
    <ligand>
        <name>Zn(2+)</name>
        <dbReference type="ChEBI" id="CHEBI:29105"/>
        <label>1</label>
    </ligand>
</feature>
<feature type="binding site" evidence="1">
    <location>
        <position position="64"/>
    </location>
    <ligand>
        <name>Zn(2+)</name>
        <dbReference type="ChEBI" id="CHEBI:29105"/>
        <label>1</label>
    </ligand>
</feature>
<feature type="binding site" evidence="1">
    <location>
        <position position="64"/>
    </location>
    <ligand>
        <name>Zn(2+)</name>
        <dbReference type="ChEBI" id="CHEBI:29105"/>
        <label>2</label>
    </ligand>
</feature>
<feature type="binding site" evidence="1">
    <location>
        <position position="99"/>
    </location>
    <ligand>
        <name>Zn(2+)</name>
        <dbReference type="ChEBI" id="CHEBI:29105"/>
        <label>2</label>
    </ligand>
</feature>
<feature type="binding site" evidence="1">
    <location>
        <position position="218"/>
    </location>
    <ligand>
        <name>Zn(2+)</name>
        <dbReference type="ChEBI" id="CHEBI:29105"/>
        <label>2</label>
    </ligand>
</feature>
<feature type="binding site" evidence="1">
    <location>
        <position position="255"/>
    </location>
    <ligand>
        <name>Zn(2+)</name>
        <dbReference type="ChEBI" id="CHEBI:29105"/>
        <label>2</label>
    </ligand>
</feature>
<feature type="binding site" evidence="1">
    <location>
        <position position="257"/>
    </location>
    <ligand>
        <name>Zn(2+)</name>
        <dbReference type="ChEBI" id="CHEBI:29105"/>
        <label>1</label>
    </ligand>
</feature>
<evidence type="ECO:0000250" key="1"/>
<evidence type="ECO:0000305" key="2"/>
<sequence length="311" mass="34737">MGSAARQPLFSFGVIADVQYADISDGRSFLGVPRYYRNSILVLQRAVETWNQHGNLKFVINMGDIVDGFCPKDQSLAATKKLVHEFEKFNGPVYHMIGNHCLYNLPREELLPLLKIPGRDGNAYYDFSPTPEYRVVVLDGYDISAVGWPQEHPNTIAALKILEEKNPNTDKNSPAGLEDVARRFVKYNGGVGEKQLQWLDSVLQDASNSNQRVIVCGHVPMSPGVASKAALLWNFDEVMNIIHKYDSVKVCLSGHDHKGGYFVDSHGVHHRSLEAALECPPGTYSFGYIDVYDNKLSLVGTDRMQSTDFEN</sequence>
<accession>Q9SB68</accession>
<organism>
    <name type="scientific">Arabidopsis thaliana</name>
    <name type="common">Mouse-ear cress</name>
    <dbReference type="NCBI Taxonomy" id="3702"/>
    <lineage>
        <taxon>Eukaryota</taxon>
        <taxon>Viridiplantae</taxon>
        <taxon>Streptophyta</taxon>
        <taxon>Embryophyta</taxon>
        <taxon>Tracheophyta</taxon>
        <taxon>Spermatophyta</taxon>
        <taxon>Magnoliopsida</taxon>
        <taxon>eudicotyledons</taxon>
        <taxon>Gunneridae</taxon>
        <taxon>Pentapetalae</taxon>
        <taxon>rosids</taxon>
        <taxon>malvids</taxon>
        <taxon>Brassicales</taxon>
        <taxon>Brassicaceae</taxon>
        <taxon>Camelineae</taxon>
        <taxon>Arabidopsis</taxon>
    </lineage>
</organism>
<dbReference type="EC" id="3.6.1.13"/>
<dbReference type="EC" id="3.6.1.16"/>
<dbReference type="EC" id="3.6.1.53"/>
<dbReference type="EMBL" id="AL035356">
    <property type="protein sequence ID" value="CAA22990.1"/>
    <property type="molecule type" value="Genomic_DNA"/>
</dbReference>
<dbReference type="EMBL" id="AL161562">
    <property type="protein sequence ID" value="CAB79383.1"/>
    <property type="molecule type" value="Genomic_DNA"/>
</dbReference>
<dbReference type="EMBL" id="CP002687">
    <property type="protein sequence ID" value="AEE84946.1"/>
    <property type="molecule type" value="Genomic_DNA"/>
</dbReference>
<dbReference type="EMBL" id="CP002687">
    <property type="protein sequence ID" value="AEE84947.2"/>
    <property type="molecule type" value="Genomic_DNA"/>
</dbReference>
<dbReference type="EMBL" id="AK118510">
    <property type="protein sequence ID" value="BAC43114.1"/>
    <property type="molecule type" value="mRNA"/>
</dbReference>
<dbReference type="EMBL" id="BT008780">
    <property type="protein sequence ID" value="AAP68219.1"/>
    <property type="molecule type" value="mRNA"/>
</dbReference>
<dbReference type="PIR" id="T05561">
    <property type="entry name" value="T05561"/>
</dbReference>
<dbReference type="RefSeq" id="NP_001119045.1">
    <molecule id="Q9SB68-1"/>
    <property type="nucleotide sequence ID" value="NM_001125573.2"/>
</dbReference>
<dbReference type="RefSeq" id="NP_974609.1">
    <molecule id="Q9SB68-1"/>
    <property type="nucleotide sequence ID" value="NM_202880.2"/>
</dbReference>
<dbReference type="SMR" id="Q9SB68"/>
<dbReference type="BioGRID" id="13864">
    <property type="interactions" value="1"/>
</dbReference>
<dbReference type="FunCoup" id="Q9SB68">
    <property type="interactions" value="1838"/>
</dbReference>
<dbReference type="STRING" id="3702.Q9SB68"/>
<dbReference type="GlyGen" id="Q9SB68">
    <property type="glycosylation" value="1 site"/>
</dbReference>
<dbReference type="PaxDb" id="3702-AT4G24730.1"/>
<dbReference type="ProteomicsDB" id="244842">
    <molecule id="Q9SB68-1"/>
</dbReference>
<dbReference type="DNASU" id="828575"/>
<dbReference type="EnsemblPlants" id="AT4G24730.1">
    <molecule id="Q9SB68-1"/>
    <property type="protein sequence ID" value="AT4G24730.1"/>
    <property type="gene ID" value="AT4G24730"/>
</dbReference>
<dbReference type="EnsemblPlants" id="AT4G24730.2">
    <molecule id="Q9SB68-1"/>
    <property type="protein sequence ID" value="AT4G24730.2"/>
    <property type="gene ID" value="AT4G24730"/>
</dbReference>
<dbReference type="GeneID" id="828575"/>
<dbReference type="Gramene" id="AT4G24730.1">
    <molecule id="Q9SB68-1"/>
    <property type="protein sequence ID" value="AT4G24730.1"/>
    <property type="gene ID" value="AT4G24730"/>
</dbReference>
<dbReference type="Gramene" id="AT4G24730.2">
    <molecule id="Q9SB68-1"/>
    <property type="protein sequence ID" value="AT4G24730.2"/>
    <property type="gene ID" value="AT4G24730"/>
</dbReference>
<dbReference type="KEGG" id="ath:AT4G24730"/>
<dbReference type="Araport" id="AT4G24730"/>
<dbReference type="TAIR" id="AT4G24730"/>
<dbReference type="eggNOG" id="ENOG502QUQW">
    <property type="taxonomic scope" value="Eukaryota"/>
</dbReference>
<dbReference type="HOGENOM" id="CLU_039893_1_0_1"/>
<dbReference type="InParanoid" id="Q9SB68"/>
<dbReference type="OMA" id="DDCTHAY"/>
<dbReference type="PhylomeDB" id="Q9SB68"/>
<dbReference type="PRO" id="PR:Q9SB68"/>
<dbReference type="Proteomes" id="UP000006548">
    <property type="component" value="Chromosome 4"/>
</dbReference>
<dbReference type="ExpressionAtlas" id="Q9SB68">
    <property type="expression patterns" value="baseline and differential"/>
</dbReference>
<dbReference type="GO" id="GO:0047631">
    <property type="term" value="F:ADP-ribose diphosphatase activity"/>
    <property type="evidence" value="ECO:0007669"/>
    <property type="project" value="UniProtKB-EC"/>
</dbReference>
<dbReference type="GO" id="GO:0047734">
    <property type="term" value="F:CDP-glycerol diphosphatase activity"/>
    <property type="evidence" value="ECO:0007669"/>
    <property type="project" value="UniProtKB-EC"/>
</dbReference>
<dbReference type="GO" id="GO:0046872">
    <property type="term" value="F:metal ion binding"/>
    <property type="evidence" value="ECO:0007669"/>
    <property type="project" value="UniProtKB-KW"/>
</dbReference>
<dbReference type="CDD" id="cd07396">
    <property type="entry name" value="MPP_Nbla03831"/>
    <property type="match status" value="1"/>
</dbReference>
<dbReference type="Gene3D" id="3.60.21.10">
    <property type="match status" value="1"/>
</dbReference>
<dbReference type="InterPro" id="IPR004843">
    <property type="entry name" value="Calcineurin-like_PHP_ApaH"/>
</dbReference>
<dbReference type="InterPro" id="IPR029052">
    <property type="entry name" value="Metallo-depent_PP-like"/>
</dbReference>
<dbReference type="InterPro" id="IPR041869">
    <property type="entry name" value="MPP_ADPRM"/>
</dbReference>
<dbReference type="PANTHER" id="PTHR16509">
    <property type="match status" value="1"/>
</dbReference>
<dbReference type="PANTHER" id="PTHR16509:SF1">
    <property type="entry name" value="MANGANESE-DEPENDENT ADP-RIBOSE_CDP-ALCOHOL DIPHOSPHATASE"/>
    <property type="match status" value="1"/>
</dbReference>
<dbReference type="Pfam" id="PF00149">
    <property type="entry name" value="Metallophos"/>
    <property type="match status" value="1"/>
</dbReference>
<dbReference type="SUPFAM" id="SSF56300">
    <property type="entry name" value="Metallo-dependent phosphatases"/>
    <property type="match status" value="1"/>
</dbReference>
<gene>
    <name type="ordered locus">At4g24730</name>
    <name type="ORF">F22K18.70</name>
</gene>
<protein>
    <recommendedName>
        <fullName>Manganese-dependent ADP-ribose/CDP-alcohol diphosphatase</fullName>
        <ecNumber>3.6.1.13</ecNumber>
        <ecNumber>3.6.1.16</ecNumber>
        <ecNumber>3.6.1.53</ecNumber>
    </recommendedName>
    <alternativeName>
        <fullName>ADPRibase-Mn</fullName>
    </alternativeName>
    <alternativeName>
        <fullName>CDP-choline phosphohydrolase</fullName>
    </alternativeName>
</protein>